<sequence>MVEKRIQPLARDAMAYVLAGGRGSRLKELTDRRAKPAVYFGGKARIIDFALSNALNSGIRRIGVATQYKAHSLIRHMQRGWNFFRPERNESFDILPASQRVSETQWYEGTADAVYQNIDIIEDYGVEYMVILAGDHVYKMDYEYMLQQHVDSGADVTIGCLEVPRMEATGFGVMHVNEKDEIFAFIEKPADPPGIPDKPDFALASMGIYVFHTKFLLDALRRDAADPTSSRDFGKDIIPYIVKNGKAVAHRFAKSCVRSDFEHEPYWRDVGTIDAYWQANIDLTAIVPELDIYDKSWPIWTYAEITPPAKFVHDDDDRRGSATSSVVSGDCIISGASLNKSLLFTGVRANSFSKLEGAVILPNVKIGRRAQLKNVVIDHGVVIPEGLVVGEDPDLDAKRFRRTESGICLITQPMIDKLDI</sequence>
<gene>
    <name evidence="1" type="primary">glgC</name>
    <name type="ordered locus">RHE_CH03595</name>
</gene>
<keyword id="KW-0067">ATP-binding</keyword>
<keyword id="KW-0119">Carbohydrate metabolism</keyword>
<keyword id="KW-0320">Glycogen biosynthesis</keyword>
<keyword id="KW-0321">Glycogen metabolism</keyword>
<keyword id="KW-0547">Nucleotide-binding</keyword>
<keyword id="KW-0548">Nucleotidyltransferase</keyword>
<keyword id="KW-1185">Reference proteome</keyword>
<keyword id="KW-0808">Transferase</keyword>
<feature type="chain" id="PRO_0000261887" description="Glucose-1-phosphate adenylyltransferase">
    <location>
        <begin position="1"/>
        <end position="420"/>
    </location>
</feature>
<feature type="binding site" evidence="1">
    <location>
        <position position="107"/>
    </location>
    <ligand>
        <name>alpha-D-glucose 1-phosphate</name>
        <dbReference type="ChEBI" id="CHEBI:58601"/>
    </ligand>
</feature>
<feature type="binding site" evidence="1">
    <location>
        <position position="172"/>
    </location>
    <ligand>
        <name>alpha-D-glucose 1-phosphate</name>
        <dbReference type="ChEBI" id="CHEBI:58601"/>
    </ligand>
</feature>
<feature type="binding site" evidence="1">
    <location>
        <begin position="187"/>
        <end position="188"/>
    </location>
    <ligand>
        <name>alpha-D-glucose 1-phosphate</name>
        <dbReference type="ChEBI" id="CHEBI:58601"/>
    </ligand>
</feature>
<feature type="binding site" evidence="1">
    <location>
        <position position="205"/>
    </location>
    <ligand>
        <name>alpha-D-glucose 1-phosphate</name>
        <dbReference type="ChEBI" id="CHEBI:58601"/>
    </ligand>
</feature>
<accession>Q2K486</accession>
<comment type="function">
    <text evidence="1">Involved in the biosynthesis of ADP-glucose, a building block required for the elongation reactions to produce glycogen. Catalyzes the reaction between ATP and alpha-D-glucose 1-phosphate (G1P) to produce pyrophosphate and ADP-Glc.</text>
</comment>
<comment type="catalytic activity">
    <reaction evidence="1">
        <text>alpha-D-glucose 1-phosphate + ATP + H(+) = ADP-alpha-D-glucose + diphosphate</text>
        <dbReference type="Rhea" id="RHEA:12120"/>
        <dbReference type="ChEBI" id="CHEBI:15378"/>
        <dbReference type="ChEBI" id="CHEBI:30616"/>
        <dbReference type="ChEBI" id="CHEBI:33019"/>
        <dbReference type="ChEBI" id="CHEBI:57498"/>
        <dbReference type="ChEBI" id="CHEBI:58601"/>
        <dbReference type="EC" id="2.7.7.27"/>
    </reaction>
</comment>
<comment type="pathway">
    <text evidence="1">Glycan biosynthesis; glycogen biosynthesis.</text>
</comment>
<comment type="subunit">
    <text evidence="1">Homotetramer.</text>
</comment>
<comment type="similarity">
    <text evidence="1">Belongs to the bacterial/plant glucose-1-phosphate adenylyltransferase family.</text>
</comment>
<proteinExistence type="inferred from homology"/>
<dbReference type="EC" id="2.7.7.27" evidence="1"/>
<dbReference type="EMBL" id="CP000133">
    <property type="protein sequence ID" value="ABC92350.1"/>
    <property type="molecule type" value="Genomic_DNA"/>
</dbReference>
<dbReference type="RefSeq" id="WP_011426810.1">
    <property type="nucleotide sequence ID" value="NC_007761.1"/>
</dbReference>
<dbReference type="SMR" id="Q2K486"/>
<dbReference type="KEGG" id="ret:RHE_CH03595"/>
<dbReference type="eggNOG" id="COG0448">
    <property type="taxonomic scope" value="Bacteria"/>
</dbReference>
<dbReference type="HOGENOM" id="CLU_029499_14_1_5"/>
<dbReference type="OrthoDB" id="9801810at2"/>
<dbReference type="UniPathway" id="UPA00164"/>
<dbReference type="Proteomes" id="UP000001936">
    <property type="component" value="Chromosome"/>
</dbReference>
<dbReference type="GO" id="GO:0005524">
    <property type="term" value="F:ATP binding"/>
    <property type="evidence" value="ECO:0007669"/>
    <property type="project" value="UniProtKB-KW"/>
</dbReference>
<dbReference type="GO" id="GO:0008878">
    <property type="term" value="F:glucose-1-phosphate adenylyltransferase activity"/>
    <property type="evidence" value="ECO:0007669"/>
    <property type="project" value="UniProtKB-UniRule"/>
</dbReference>
<dbReference type="GO" id="GO:0005978">
    <property type="term" value="P:glycogen biosynthetic process"/>
    <property type="evidence" value="ECO:0007669"/>
    <property type="project" value="UniProtKB-UniRule"/>
</dbReference>
<dbReference type="CDD" id="cd02508">
    <property type="entry name" value="ADP_Glucose_PP"/>
    <property type="match status" value="1"/>
</dbReference>
<dbReference type="CDD" id="cd04651">
    <property type="entry name" value="LbH_G1P_AT_C"/>
    <property type="match status" value="1"/>
</dbReference>
<dbReference type="Gene3D" id="2.160.10.10">
    <property type="entry name" value="Hexapeptide repeat proteins"/>
    <property type="match status" value="1"/>
</dbReference>
<dbReference type="Gene3D" id="3.90.550.10">
    <property type="entry name" value="Spore Coat Polysaccharide Biosynthesis Protein SpsA, Chain A"/>
    <property type="match status" value="1"/>
</dbReference>
<dbReference type="HAMAP" id="MF_00624">
    <property type="entry name" value="GlgC"/>
    <property type="match status" value="1"/>
</dbReference>
<dbReference type="InterPro" id="IPR011831">
    <property type="entry name" value="ADP-Glc_PPase"/>
</dbReference>
<dbReference type="InterPro" id="IPR005836">
    <property type="entry name" value="ADP_Glu_pyroP_CS"/>
</dbReference>
<dbReference type="InterPro" id="IPR023049">
    <property type="entry name" value="GlgC_bac"/>
</dbReference>
<dbReference type="InterPro" id="IPR056818">
    <property type="entry name" value="GlmU/GlgC-like_hexapep"/>
</dbReference>
<dbReference type="InterPro" id="IPR005835">
    <property type="entry name" value="NTP_transferase_dom"/>
</dbReference>
<dbReference type="InterPro" id="IPR029044">
    <property type="entry name" value="Nucleotide-diphossugar_trans"/>
</dbReference>
<dbReference type="InterPro" id="IPR011004">
    <property type="entry name" value="Trimer_LpxA-like_sf"/>
</dbReference>
<dbReference type="NCBIfam" id="TIGR02091">
    <property type="entry name" value="glgC"/>
    <property type="match status" value="1"/>
</dbReference>
<dbReference type="NCBIfam" id="NF001947">
    <property type="entry name" value="PRK00725.1"/>
    <property type="match status" value="1"/>
</dbReference>
<dbReference type="NCBIfam" id="NF002023">
    <property type="entry name" value="PRK00844.1"/>
    <property type="match status" value="1"/>
</dbReference>
<dbReference type="PANTHER" id="PTHR43523:SF2">
    <property type="entry name" value="GLUCOSE-1-PHOSPHATE ADENYLYLTRANSFERASE"/>
    <property type="match status" value="1"/>
</dbReference>
<dbReference type="PANTHER" id="PTHR43523">
    <property type="entry name" value="GLUCOSE-1-PHOSPHATE ADENYLYLTRANSFERASE-RELATED"/>
    <property type="match status" value="1"/>
</dbReference>
<dbReference type="Pfam" id="PF24894">
    <property type="entry name" value="Hexapep_GlmU"/>
    <property type="match status" value="1"/>
</dbReference>
<dbReference type="Pfam" id="PF00483">
    <property type="entry name" value="NTP_transferase"/>
    <property type="match status" value="1"/>
</dbReference>
<dbReference type="SUPFAM" id="SSF53448">
    <property type="entry name" value="Nucleotide-diphospho-sugar transferases"/>
    <property type="match status" value="1"/>
</dbReference>
<dbReference type="SUPFAM" id="SSF51161">
    <property type="entry name" value="Trimeric LpxA-like enzymes"/>
    <property type="match status" value="1"/>
</dbReference>
<dbReference type="PROSITE" id="PS00808">
    <property type="entry name" value="ADP_GLC_PYROPHOSPH_1"/>
    <property type="match status" value="1"/>
</dbReference>
<dbReference type="PROSITE" id="PS00809">
    <property type="entry name" value="ADP_GLC_PYROPHOSPH_2"/>
    <property type="match status" value="1"/>
</dbReference>
<dbReference type="PROSITE" id="PS00810">
    <property type="entry name" value="ADP_GLC_PYROPHOSPH_3"/>
    <property type="match status" value="1"/>
</dbReference>
<evidence type="ECO:0000255" key="1">
    <source>
        <dbReference type="HAMAP-Rule" id="MF_00624"/>
    </source>
</evidence>
<protein>
    <recommendedName>
        <fullName evidence="1">Glucose-1-phosphate adenylyltransferase</fullName>
        <ecNumber evidence="1">2.7.7.27</ecNumber>
    </recommendedName>
    <alternativeName>
        <fullName evidence="1">ADP-glucose pyrophosphorylase</fullName>
        <shortName evidence="1">ADPGlc PPase</shortName>
    </alternativeName>
    <alternativeName>
        <fullName evidence="1">ADP-glucose synthase</fullName>
    </alternativeName>
</protein>
<reference key="1">
    <citation type="journal article" date="2006" name="Proc. Natl. Acad. Sci. U.S.A.">
        <title>The partitioned Rhizobium etli genome: genetic and metabolic redundancy in seven interacting replicons.</title>
        <authorList>
            <person name="Gonzalez V."/>
            <person name="Santamaria R.I."/>
            <person name="Bustos P."/>
            <person name="Hernandez-Gonzalez I."/>
            <person name="Medrano-Soto A."/>
            <person name="Moreno-Hagelsieb G."/>
            <person name="Janga S.C."/>
            <person name="Ramirez M.A."/>
            <person name="Jimenez-Jacinto V."/>
            <person name="Collado-Vides J."/>
            <person name="Davila G."/>
        </authorList>
    </citation>
    <scope>NUCLEOTIDE SEQUENCE [LARGE SCALE GENOMIC DNA]</scope>
    <source>
        <strain>ATCC 51251 / DSM 11541 / JCM 21823 / NBRC 15573 / CFN 42</strain>
    </source>
</reference>
<organism>
    <name type="scientific">Rhizobium etli (strain ATCC 51251 / DSM 11541 / JCM 21823 / NBRC 15573 / CFN 42)</name>
    <dbReference type="NCBI Taxonomy" id="347834"/>
    <lineage>
        <taxon>Bacteria</taxon>
        <taxon>Pseudomonadati</taxon>
        <taxon>Pseudomonadota</taxon>
        <taxon>Alphaproteobacteria</taxon>
        <taxon>Hyphomicrobiales</taxon>
        <taxon>Rhizobiaceae</taxon>
        <taxon>Rhizobium/Agrobacterium group</taxon>
        <taxon>Rhizobium</taxon>
    </lineage>
</organism>
<name>GLGC_RHIEC</name>